<accession>B7MIB7</accession>
<comment type="function">
    <text evidence="1">Catalyzes the formation of methylglyoxal from dihydroxyacetone phosphate.</text>
</comment>
<comment type="catalytic activity">
    <reaction evidence="1">
        <text>dihydroxyacetone phosphate = methylglyoxal + phosphate</text>
        <dbReference type="Rhea" id="RHEA:17937"/>
        <dbReference type="ChEBI" id="CHEBI:17158"/>
        <dbReference type="ChEBI" id="CHEBI:43474"/>
        <dbReference type="ChEBI" id="CHEBI:57642"/>
        <dbReference type="EC" id="4.2.3.3"/>
    </reaction>
</comment>
<comment type="similarity">
    <text evidence="1">Belongs to the methylglyoxal synthase family.</text>
</comment>
<proteinExistence type="inferred from homology"/>
<reference key="1">
    <citation type="journal article" date="2009" name="PLoS Genet.">
        <title>Organised genome dynamics in the Escherichia coli species results in highly diverse adaptive paths.</title>
        <authorList>
            <person name="Touchon M."/>
            <person name="Hoede C."/>
            <person name="Tenaillon O."/>
            <person name="Barbe V."/>
            <person name="Baeriswyl S."/>
            <person name="Bidet P."/>
            <person name="Bingen E."/>
            <person name="Bonacorsi S."/>
            <person name="Bouchier C."/>
            <person name="Bouvet O."/>
            <person name="Calteau A."/>
            <person name="Chiapello H."/>
            <person name="Clermont O."/>
            <person name="Cruveiller S."/>
            <person name="Danchin A."/>
            <person name="Diard M."/>
            <person name="Dossat C."/>
            <person name="Karoui M.E."/>
            <person name="Frapy E."/>
            <person name="Garry L."/>
            <person name="Ghigo J.M."/>
            <person name="Gilles A.M."/>
            <person name="Johnson J."/>
            <person name="Le Bouguenec C."/>
            <person name="Lescat M."/>
            <person name="Mangenot S."/>
            <person name="Martinez-Jehanne V."/>
            <person name="Matic I."/>
            <person name="Nassif X."/>
            <person name="Oztas S."/>
            <person name="Petit M.A."/>
            <person name="Pichon C."/>
            <person name="Rouy Z."/>
            <person name="Ruf C.S."/>
            <person name="Schneider D."/>
            <person name="Tourret J."/>
            <person name="Vacherie B."/>
            <person name="Vallenet D."/>
            <person name="Medigue C."/>
            <person name="Rocha E.P.C."/>
            <person name="Denamur E."/>
        </authorList>
    </citation>
    <scope>NUCLEOTIDE SEQUENCE [LARGE SCALE GENOMIC DNA]</scope>
    <source>
        <strain>S88 / ExPEC</strain>
    </source>
</reference>
<keyword id="KW-0456">Lyase</keyword>
<keyword id="KW-1185">Reference proteome</keyword>
<gene>
    <name evidence="1" type="primary">mgsA</name>
    <name type="ordered locus">ECS88_0985</name>
</gene>
<feature type="chain" id="PRO_1000128986" description="Methylglyoxal synthase">
    <location>
        <begin position="1"/>
        <end position="152"/>
    </location>
</feature>
<feature type="domain" description="MGS-like" evidence="1">
    <location>
        <begin position="6"/>
        <end position="152"/>
    </location>
</feature>
<feature type="active site" description="Proton donor/acceptor" evidence="1">
    <location>
        <position position="71"/>
    </location>
</feature>
<feature type="binding site" evidence="1">
    <location>
        <position position="19"/>
    </location>
    <ligand>
        <name>substrate</name>
    </ligand>
</feature>
<feature type="binding site" evidence="1">
    <location>
        <position position="23"/>
    </location>
    <ligand>
        <name>substrate</name>
    </ligand>
</feature>
<feature type="binding site" evidence="1">
    <location>
        <begin position="45"/>
        <end position="48"/>
    </location>
    <ligand>
        <name>substrate</name>
    </ligand>
</feature>
<feature type="binding site" evidence="1">
    <location>
        <begin position="65"/>
        <end position="66"/>
    </location>
    <ligand>
        <name>substrate</name>
    </ligand>
</feature>
<feature type="binding site" evidence="1">
    <location>
        <position position="98"/>
    </location>
    <ligand>
        <name>substrate</name>
    </ligand>
</feature>
<organism>
    <name type="scientific">Escherichia coli O45:K1 (strain S88 / ExPEC)</name>
    <dbReference type="NCBI Taxonomy" id="585035"/>
    <lineage>
        <taxon>Bacteria</taxon>
        <taxon>Pseudomonadati</taxon>
        <taxon>Pseudomonadota</taxon>
        <taxon>Gammaproteobacteria</taxon>
        <taxon>Enterobacterales</taxon>
        <taxon>Enterobacteriaceae</taxon>
        <taxon>Escherichia</taxon>
    </lineage>
</organism>
<sequence>MELTTRTLPSRKHIALVAHDHCKQMLMSWVERHQPLLEQHVLYATGTTGNLISRATGMNVNAMLSGPMGGDQQVGALISEGKIDVLIFFWDPLNAVPHDPDVKALLRLATVWNIPVATNVATADFIIQSPHFNDAVDILIPDYQRYLADRLK</sequence>
<evidence type="ECO:0000255" key="1">
    <source>
        <dbReference type="HAMAP-Rule" id="MF_00549"/>
    </source>
</evidence>
<protein>
    <recommendedName>
        <fullName evidence="1">Methylglyoxal synthase</fullName>
        <shortName evidence="1">MGS</shortName>
        <ecNumber evidence="1">4.2.3.3</ecNumber>
    </recommendedName>
</protein>
<name>MGSA_ECO45</name>
<dbReference type="EC" id="4.2.3.3" evidence="1"/>
<dbReference type="EMBL" id="CU928161">
    <property type="protein sequence ID" value="CAR02317.1"/>
    <property type="molecule type" value="Genomic_DNA"/>
</dbReference>
<dbReference type="RefSeq" id="WP_001295939.1">
    <property type="nucleotide sequence ID" value="NC_011742.1"/>
</dbReference>
<dbReference type="SMR" id="B7MIB7"/>
<dbReference type="KEGG" id="ecz:ECS88_0985"/>
<dbReference type="HOGENOM" id="CLU_120420_0_1_6"/>
<dbReference type="Proteomes" id="UP000000747">
    <property type="component" value="Chromosome"/>
</dbReference>
<dbReference type="GO" id="GO:0005829">
    <property type="term" value="C:cytosol"/>
    <property type="evidence" value="ECO:0007669"/>
    <property type="project" value="TreeGrafter"/>
</dbReference>
<dbReference type="GO" id="GO:0008929">
    <property type="term" value="F:methylglyoxal synthase activity"/>
    <property type="evidence" value="ECO:0007669"/>
    <property type="project" value="UniProtKB-UniRule"/>
</dbReference>
<dbReference type="GO" id="GO:0019242">
    <property type="term" value="P:methylglyoxal biosynthetic process"/>
    <property type="evidence" value="ECO:0007669"/>
    <property type="project" value="UniProtKB-UniRule"/>
</dbReference>
<dbReference type="CDD" id="cd01422">
    <property type="entry name" value="MGS"/>
    <property type="match status" value="1"/>
</dbReference>
<dbReference type="FunFam" id="3.40.50.1380:FF:000002">
    <property type="entry name" value="Methylglyoxal synthase"/>
    <property type="match status" value="1"/>
</dbReference>
<dbReference type="Gene3D" id="3.40.50.1380">
    <property type="entry name" value="Methylglyoxal synthase-like domain"/>
    <property type="match status" value="1"/>
</dbReference>
<dbReference type="HAMAP" id="MF_00549">
    <property type="entry name" value="Methylglyoxal_synth"/>
    <property type="match status" value="1"/>
</dbReference>
<dbReference type="InterPro" id="IPR004363">
    <property type="entry name" value="Methylgl_synth"/>
</dbReference>
<dbReference type="InterPro" id="IPR018148">
    <property type="entry name" value="Methylglyoxal_synth_AS"/>
</dbReference>
<dbReference type="InterPro" id="IPR011607">
    <property type="entry name" value="MGS-like_dom"/>
</dbReference>
<dbReference type="InterPro" id="IPR036914">
    <property type="entry name" value="MGS-like_dom_sf"/>
</dbReference>
<dbReference type="NCBIfam" id="TIGR00160">
    <property type="entry name" value="MGSA"/>
    <property type="match status" value="1"/>
</dbReference>
<dbReference type="NCBIfam" id="NF003559">
    <property type="entry name" value="PRK05234.1"/>
    <property type="match status" value="1"/>
</dbReference>
<dbReference type="PANTHER" id="PTHR30492">
    <property type="entry name" value="METHYLGLYOXAL SYNTHASE"/>
    <property type="match status" value="1"/>
</dbReference>
<dbReference type="PANTHER" id="PTHR30492:SF0">
    <property type="entry name" value="METHYLGLYOXAL SYNTHASE"/>
    <property type="match status" value="1"/>
</dbReference>
<dbReference type="Pfam" id="PF02142">
    <property type="entry name" value="MGS"/>
    <property type="match status" value="1"/>
</dbReference>
<dbReference type="PIRSF" id="PIRSF006614">
    <property type="entry name" value="Methylglyox_syn"/>
    <property type="match status" value="1"/>
</dbReference>
<dbReference type="SMART" id="SM00851">
    <property type="entry name" value="MGS"/>
    <property type="match status" value="1"/>
</dbReference>
<dbReference type="SUPFAM" id="SSF52335">
    <property type="entry name" value="Methylglyoxal synthase-like"/>
    <property type="match status" value="1"/>
</dbReference>
<dbReference type="PROSITE" id="PS01335">
    <property type="entry name" value="METHYLGLYOXAL_SYNTH"/>
    <property type="match status" value="1"/>
</dbReference>
<dbReference type="PROSITE" id="PS51855">
    <property type="entry name" value="MGS"/>
    <property type="match status" value="1"/>
</dbReference>